<gene>
    <name evidence="1" type="primary">aroQ</name>
    <name type="ordered locus">NT01EI_3499</name>
</gene>
<reference key="1">
    <citation type="submission" date="2009-03" db="EMBL/GenBank/DDBJ databases">
        <title>Complete genome sequence of Edwardsiella ictaluri 93-146.</title>
        <authorList>
            <person name="Williams M.L."/>
            <person name="Gillaspy A.F."/>
            <person name="Dyer D.W."/>
            <person name="Thune R.L."/>
            <person name="Waldbieser G.C."/>
            <person name="Schuster S.C."/>
            <person name="Gipson J."/>
            <person name="Zaitshik J."/>
            <person name="Landry C."/>
            <person name="Lawrence M.L."/>
        </authorList>
    </citation>
    <scope>NUCLEOTIDE SEQUENCE [LARGE SCALE GENOMIC DNA]</scope>
    <source>
        <strain>93-146</strain>
    </source>
</reference>
<protein>
    <recommendedName>
        <fullName evidence="1">3-dehydroquinate dehydratase</fullName>
        <shortName evidence="1">3-dehydroquinase</shortName>
        <ecNumber evidence="1">4.2.1.10</ecNumber>
    </recommendedName>
    <alternativeName>
        <fullName evidence="1">Type II DHQase</fullName>
    </alternativeName>
</protein>
<evidence type="ECO:0000255" key="1">
    <source>
        <dbReference type="HAMAP-Rule" id="MF_00169"/>
    </source>
</evidence>
<keyword id="KW-0028">Amino-acid biosynthesis</keyword>
<keyword id="KW-0057">Aromatic amino acid biosynthesis</keyword>
<keyword id="KW-0456">Lyase</keyword>
<name>AROQ_EDWI9</name>
<comment type="function">
    <text evidence="1">Catalyzes a trans-dehydration via an enolate intermediate.</text>
</comment>
<comment type="catalytic activity">
    <reaction evidence="1">
        <text>3-dehydroquinate = 3-dehydroshikimate + H2O</text>
        <dbReference type="Rhea" id="RHEA:21096"/>
        <dbReference type="ChEBI" id="CHEBI:15377"/>
        <dbReference type="ChEBI" id="CHEBI:16630"/>
        <dbReference type="ChEBI" id="CHEBI:32364"/>
        <dbReference type="EC" id="4.2.1.10"/>
    </reaction>
</comment>
<comment type="pathway">
    <text evidence="1">Metabolic intermediate biosynthesis; chorismate biosynthesis; chorismate from D-erythrose 4-phosphate and phosphoenolpyruvate: step 3/7.</text>
</comment>
<comment type="subunit">
    <text evidence="1">Homododecamer.</text>
</comment>
<comment type="similarity">
    <text evidence="1">Belongs to the type-II 3-dehydroquinase family.</text>
</comment>
<sequence length="149" mass="16313">MADKFNILLLNGPNLNMLGVREPEKYGTLTLAQIAARLDRRAQALGVSLHHIQSNAEHELIAQIHAAFGNTDFILVNPAAFTHTSVALRDALLAVQIPFIEIHLSNVHAREPFRHHSYLSDIAVGVICGLGAEGYEYALQAAVNRLNKS</sequence>
<feature type="chain" id="PRO_1000203673" description="3-dehydroquinate dehydratase">
    <location>
        <begin position="1"/>
        <end position="149"/>
    </location>
</feature>
<feature type="active site" description="Proton acceptor" evidence="1">
    <location>
        <position position="26"/>
    </location>
</feature>
<feature type="active site" description="Proton donor" evidence="1">
    <location>
        <position position="103"/>
    </location>
</feature>
<feature type="binding site" evidence="1">
    <location>
        <position position="77"/>
    </location>
    <ligand>
        <name>substrate</name>
    </ligand>
</feature>
<feature type="binding site" evidence="1">
    <location>
        <position position="83"/>
    </location>
    <ligand>
        <name>substrate</name>
    </ligand>
</feature>
<feature type="binding site" evidence="1">
    <location>
        <position position="90"/>
    </location>
    <ligand>
        <name>substrate</name>
    </ligand>
</feature>
<feature type="binding site" evidence="1">
    <location>
        <begin position="104"/>
        <end position="105"/>
    </location>
    <ligand>
        <name>substrate</name>
    </ligand>
</feature>
<feature type="binding site" evidence="1">
    <location>
        <position position="114"/>
    </location>
    <ligand>
        <name>substrate</name>
    </ligand>
</feature>
<feature type="site" description="Transition state stabilizer" evidence="1">
    <location>
        <position position="21"/>
    </location>
</feature>
<dbReference type="EC" id="4.2.1.10" evidence="1"/>
<dbReference type="EMBL" id="CP001600">
    <property type="protein sequence ID" value="ACR70635.1"/>
    <property type="molecule type" value="Genomic_DNA"/>
</dbReference>
<dbReference type="RefSeq" id="WP_015872704.1">
    <property type="nucleotide sequence ID" value="NC_012779.2"/>
</dbReference>
<dbReference type="SMR" id="C5BEW3"/>
<dbReference type="STRING" id="67780.B6E78_09115"/>
<dbReference type="KEGG" id="eic:NT01EI_3499"/>
<dbReference type="PATRIC" id="fig|634503.3.peg.3116"/>
<dbReference type="HOGENOM" id="CLU_090968_1_0_6"/>
<dbReference type="OrthoDB" id="9790793at2"/>
<dbReference type="UniPathway" id="UPA00053">
    <property type="reaction ID" value="UER00086"/>
</dbReference>
<dbReference type="Proteomes" id="UP000001485">
    <property type="component" value="Chromosome"/>
</dbReference>
<dbReference type="GO" id="GO:0003855">
    <property type="term" value="F:3-dehydroquinate dehydratase activity"/>
    <property type="evidence" value="ECO:0007669"/>
    <property type="project" value="UniProtKB-UniRule"/>
</dbReference>
<dbReference type="GO" id="GO:0008652">
    <property type="term" value="P:amino acid biosynthetic process"/>
    <property type="evidence" value="ECO:0007669"/>
    <property type="project" value="UniProtKB-KW"/>
</dbReference>
<dbReference type="GO" id="GO:0009073">
    <property type="term" value="P:aromatic amino acid family biosynthetic process"/>
    <property type="evidence" value="ECO:0007669"/>
    <property type="project" value="UniProtKB-KW"/>
</dbReference>
<dbReference type="GO" id="GO:0009423">
    <property type="term" value="P:chorismate biosynthetic process"/>
    <property type="evidence" value="ECO:0007669"/>
    <property type="project" value="UniProtKB-UniRule"/>
</dbReference>
<dbReference type="GO" id="GO:0019631">
    <property type="term" value="P:quinate catabolic process"/>
    <property type="evidence" value="ECO:0007669"/>
    <property type="project" value="TreeGrafter"/>
</dbReference>
<dbReference type="CDD" id="cd00466">
    <property type="entry name" value="DHQase_II"/>
    <property type="match status" value="1"/>
</dbReference>
<dbReference type="Gene3D" id="3.40.50.9100">
    <property type="entry name" value="Dehydroquinase, class II"/>
    <property type="match status" value="1"/>
</dbReference>
<dbReference type="HAMAP" id="MF_00169">
    <property type="entry name" value="AroQ"/>
    <property type="match status" value="1"/>
</dbReference>
<dbReference type="InterPro" id="IPR001874">
    <property type="entry name" value="DHquinase_II"/>
</dbReference>
<dbReference type="InterPro" id="IPR018509">
    <property type="entry name" value="DHquinase_II_CS"/>
</dbReference>
<dbReference type="InterPro" id="IPR036441">
    <property type="entry name" value="DHquinase_II_sf"/>
</dbReference>
<dbReference type="NCBIfam" id="TIGR01088">
    <property type="entry name" value="aroQ"/>
    <property type="match status" value="1"/>
</dbReference>
<dbReference type="NCBIfam" id="NF003804">
    <property type="entry name" value="PRK05395.1-1"/>
    <property type="match status" value="1"/>
</dbReference>
<dbReference type="NCBIfam" id="NF003805">
    <property type="entry name" value="PRK05395.1-2"/>
    <property type="match status" value="1"/>
</dbReference>
<dbReference type="NCBIfam" id="NF003806">
    <property type="entry name" value="PRK05395.1-3"/>
    <property type="match status" value="1"/>
</dbReference>
<dbReference type="NCBIfam" id="NF003807">
    <property type="entry name" value="PRK05395.1-4"/>
    <property type="match status" value="1"/>
</dbReference>
<dbReference type="PANTHER" id="PTHR21272">
    <property type="entry name" value="CATABOLIC 3-DEHYDROQUINASE"/>
    <property type="match status" value="1"/>
</dbReference>
<dbReference type="PANTHER" id="PTHR21272:SF3">
    <property type="entry name" value="CATABOLIC 3-DEHYDROQUINASE"/>
    <property type="match status" value="1"/>
</dbReference>
<dbReference type="Pfam" id="PF01220">
    <property type="entry name" value="DHquinase_II"/>
    <property type="match status" value="1"/>
</dbReference>
<dbReference type="PIRSF" id="PIRSF001399">
    <property type="entry name" value="DHquinase_II"/>
    <property type="match status" value="1"/>
</dbReference>
<dbReference type="SUPFAM" id="SSF52304">
    <property type="entry name" value="Type II 3-dehydroquinate dehydratase"/>
    <property type="match status" value="1"/>
</dbReference>
<dbReference type="PROSITE" id="PS01029">
    <property type="entry name" value="DEHYDROQUINASE_II"/>
    <property type="match status" value="1"/>
</dbReference>
<accession>C5BEW3</accession>
<organism>
    <name type="scientific">Edwardsiella ictaluri (strain 93-146)</name>
    <dbReference type="NCBI Taxonomy" id="634503"/>
    <lineage>
        <taxon>Bacteria</taxon>
        <taxon>Pseudomonadati</taxon>
        <taxon>Pseudomonadota</taxon>
        <taxon>Gammaproteobacteria</taxon>
        <taxon>Enterobacterales</taxon>
        <taxon>Hafniaceae</taxon>
        <taxon>Edwardsiella</taxon>
    </lineage>
</organism>
<proteinExistence type="inferred from homology"/>